<comment type="function">
    <text evidence="1">The heterodimer acts as both an ATP-dependent DNA helicase and an ATP-dependent, dual-direction single-stranded exonuclease. Recognizes the chi site generating a DNA molecule suitable for the initiation of homologous recombination. The AddA nuclease domain is required for chi fragment generation; this subunit has the helicase and 3' -&gt; 5' nuclease activities.</text>
</comment>
<comment type="catalytic activity">
    <reaction evidence="1">
        <text>Couples ATP hydrolysis with the unwinding of duplex DNA by translocating in the 3'-5' direction.</text>
        <dbReference type="EC" id="5.6.2.4"/>
    </reaction>
</comment>
<comment type="catalytic activity">
    <reaction evidence="1">
        <text>ATP + H2O = ADP + phosphate + H(+)</text>
        <dbReference type="Rhea" id="RHEA:13065"/>
        <dbReference type="ChEBI" id="CHEBI:15377"/>
        <dbReference type="ChEBI" id="CHEBI:15378"/>
        <dbReference type="ChEBI" id="CHEBI:30616"/>
        <dbReference type="ChEBI" id="CHEBI:43474"/>
        <dbReference type="ChEBI" id="CHEBI:456216"/>
        <dbReference type="EC" id="5.6.2.4"/>
    </reaction>
</comment>
<comment type="cofactor">
    <cofactor evidence="1">
        <name>Mg(2+)</name>
        <dbReference type="ChEBI" id="CHEBI:18420"/>
    </cofactor>
</comment>
<comment type="subunit">
    <text evidence="1">Heterodimer of AddA and AddB/RexB.</text>
</comment>
<comment type="similarity">
    <text evidence="1">Belongs to the helicase family. AddA subfamily.</text>
</comment>
<keyword id="KW-0067">ATP-binding</keyword>
<keyword id="KW-0227">DNA damage</keyword>
<keyword id="KW-0234">DNA repair</keyword>
<keyword id="KW-0238">DNA-binding</keyword>
<keyword id="KW-0269">Exonuclease</keyword>
<keyword id="KW-0347">Helicase</keyword>
<keyword id="KW-0378">Hydrolase</keyword>
<keyword id="KW-0413">Isomerase</keyword>
<keyword id="KW-0540">Nuclease</keyword>
<keyword id="KW-0547">Nucleotide-binding</keyword>
<name>ADDA_STAHJ</name>
<feature type="chain" id="PRO_0000379324" description="ATP-dependent helicase/nuclease subunit A">
    <location>
        <begin position="1"/>
        <end position="1225"/>
    </location>
</feature>
<feature type="domain" description="UvrD-like helicase ATP-binding" evidence="1">
    <location>
        <begin position="11"/>
        <end position="478"/>
    </location>
</feature>
<feature type="domain" description="UvrD-like helicase C-terminal" evidence="1">
    <location>
        <begin position="479"/>
        <end position="790"/>
    </location>
</feature>
<feature type="region of interest" description="Disordered" evidence="2">
    <location>
        <begin position="999"/>
        <end position="1018"/>
    </location>
</feature>
<feature type="compositionally biased region" description="Basic and acidic residues" evidence="2">
    <location>
        <begin position="999"/>
        <end position="1014"/>
    </location>
</feature>
<feature type="binding site" evidence="1">
    <location>
        <begin position="32"/>
        <end position="39"/>
    </location>
    <ligand>
        <name>ATP</name>
        <dbReference type="ChEBI" id="CHEBI:30616"/>
    </ligand>
</feature>
<accession>Q4L4Y3</accession>
<gene>
    <name evidence="1" type="primary">addA</name>
    <name type="ordered locus">SH1983</name>
</gene>
<organism>
    <name type="scientific">Staphylococcus haemolyticus (strain JCSC1435)</name>
    <dbReference type="NCBI Taxonomy" id="279808"/>
    <lineage>
        <taxon>Bacteria</taxon>
        <taxon>Bacillati</taxon>
        <taxon>Bacillota</taxon>
        <taxon>Bacilli</taxon>
        <taxon>Bacillales</taxon>
        <taxon>Staphylococcaceae</taxon>
        <taxon>Staphylococcus</taxon>
    </lineage>
</organism>
<protein>
    <recommendedName>
        <fullName evidence="1">ATP-dependent helicase/nuclease subunit A</fullName>
        <ecNumber evidence="1">3.1.-.-</ecNumber>
        <ecNumber evidence="1">5.6.2.4</ecNumber>
    </recommendedName>
    <alternativeName>
        <fullName evidence="1">ATP-dependent helicase/nuclease AddA</fullName>
    </alternativeName>
    <alternativeName>
        <fullName evidence="1">DNA 3'-5' helicase AddA</fullName>
    </alternativeName>
</protein>
<evidence type="ECO:0000255" key="1">
    <source>
        <dbReference type="HAMAP-Rule" id="MF_01451"/>
    </source>
</evidence>
<evidence type="ECO:0000256" key="2">
    <source>
        <dbReference type="SAM" id="MobiDB-lite"/>
    </source>
</evidence>
<reference key="1">
    <citation type="journal article" date="2005" name="J. Bacteriol.">
        <title>Whole-genome sequencing of Staphylococcus haemolyticus uncovers the extreme plasticity of its genome and the evolution of human-colonizing staphylococcal species.</title>
        <authorList>
            <person name="Takeuchi F."/>
            <person name="Watanabe S."/>
            <person name="Baba T."/>
            <person name="Yuzawa H."/>
            <person name="Ito T."/>
            <person name="Morimoto Y."/>
            <person name="Kuroda M."/>
            <person name="Cui L."/>
            <person name="Takahashi M."/>
            <person name="Ankai A."/>
            <person name="Baba S."/>
            <person name="Fukui S."/>
            <person name="Lee J.C."/>
            <person name="Hiramatsu K."/>
        </authorList>
    </citation>
    <scope>NUCLEOTIDE SEQUENCE [LARGE SCALE GENOMIC DNA]</scope>
    <source>
        <strain>JCSC1435</strain>
    </source>
</reference>
<sequence>MNNIPIKPKDAQWTDAQWKSIYANGQDVLVAAAAGSGKTAVLVERIIQKIIRDEIDVDKLLVVTFTNLSAREMKHRVDQRIQQASIEDPRNEHLKNQRIKIHQAQISTLHSFCLKIIQQHYDVIDLDPNFRTISDVENVLLLEQSIDEVLEKHYDTPDIEFLTLVEQLSSDRNDDNFRDLLKRFYNFSIANPSPFEWLDSLVEIYTDDNKHKLYLDELERLSKIYIKAAYHTLLEAENNFLNCIEAEKHLDVIKLEKFKCEKMIEGNVINFEEIINYTSEKLPTITKKLKDTNEDEGISSQFLTNAKDFFDDYKKLLSEVKNKYLMRSYEDLKVDMKRLAPRIQYLVQIVKDIINGFAEKKRSRNVLDFSDYEHFALQILTDQEGNASPIAKEYRSQFEEILVDEYQDTNQVQEAIISKIKRGDESNGNLFMVGDVKQSIYKFRQADPTLFMDKYHRFTKDGDQSGLRIDLSKNFRSRKEVLATTNYLFDHMMDEEVGEIEYDADARLYFGATKYSDKSMPLELHALIQDKSSDNDLEKSEQEARYIAEQVKYIIEHKQVYDMKSETYRQATFKDIVILERGLKNARNLQQVFKDYNIPFHVNSKEGYFEQTEVRLVLSFLRTVDNPLQDIYLVGLMRSVIYQFTEDELANIRVQSMNDDYFYQSILHYMKDQEANPLLVEKLEHFMDDINMYQEYSQSHPVYQLIDKFYNDHYVIQYFSGLIGGKGRRANLYGLFNKAVEFENSSFRGLYQFIRFIDELIERNKDFGEENVIGPNDNVVRMMTVHSSKGLEFPYVIYSELSKNFNKGDLRKPLILNQKYGLGIDYFDLEQNVTYPSLSSVVIKSITEKELISEEMRLMYVALTRAKEQLILIGTIDKEEALEKLERLPISGNQIALHKRLSADRPFDLIYSILAKYQSTSLLPEYRFEKSIDNLDESLRPTVDIKIAQFEELSIEDSESEQESRNISDLEVEGSHDDTLKQQINDQLSFKYPYLKDTEKPSKQSVSELKRQLETEESGTSYERVRQYRIGVSTYERPKFLRENKKRKANEIGTLMHTVMQHLPFKETRMTETELNDYINELIEKHIIEEDAKKDIQFEAVMNFIRSDLYMTITQADKVYRELPFVVNQARVDEMPESDEDVSIIQGMIDLIFLKDDQYYFVDYKTDAFNKRRGMTDEEVGIQLRDKYKIQMKYYKNTLETILNSKVYGYLYFFQFGQMSIEEDV</sequence>
<proteinExistence type="inferred from homology"/>
<dbReference type="EC" id="3.1.-.-" evidence="1"/>
<dbReference type="EC" id="5.6.2.4" evidence="1"/>
<dbReference type="EMBL" id="AP006716">
    <property type="protein sequence ID" value="BAE05292.1"/>
    <property type="molecule type" value="Genomic_DNA"/>
</dbReference>
<dbReference type="RefSeq" id="WP_011276250.1">
    <property type="nucleotide sequence ID" value="NC_007168.1"/>
</dbReference>
<dbReference type="SMR" id="Q4L4Y3"/>
<dbReference type="KEGG" id="sha:SH1983"/>
<dbReference type="eggNOG" id="COG1074">
    <property type="taxonomic scope" value="Bacteria"/>
</dbReference>
<dbReference type="HOGENOM" id="CLU_001114_3_1_9"/>
<dbReference type="OrthoDB" id="9810135at2"/>
<dbReference type="Proteomes" id="UP000000543">
    <property type="component" value="Chromosome"/>
</dbReference>
<dbReference type="GO" id="GO:0005829">
    <property type="term" value="C:cytosol"/>
    <property type="evidence" value="ECO:0007669"/>
    <property type="project" value="TreeGrafter"/>
</dbReference>
<dbReference type="GO" id="GO:0033202">
    <property type="term" value="C:DNA helicase complex"/>
    <property type="evidence" value="ECO:0007669"/>
    <property type="project" value="TreeGrafter"/>
</dbReference>
<dbReference type="GO" id="GO:0043138">
    <property type="term" value="F:3'-5' DNA helicase activity"/>
    <property type="evidence" value="ECO:0007669"/>
    <property type="project" value="UniProtKB-UniRule"/>
</dbReference>
<dbReference type="GO" id="GO:0008408">
    <property type="term" value="F:3'-5' exonuclease activity"/>
    <property type="evidence" value="ECO:0007669"/>
    <property type="project" value="UniProtKB-UniRule"/>
</dbReference>
<dbReference type="GO" id="GO:0005524">
    <property type="term" value="F:ATP binding"/>
    <property type="evidence" value="ECO:0007669"/>
    <property type="project" value="UniProtKB-UniRule"/>
</dbReference>
<dbReference type="GO" id="GO:0016887">
    <property type="term" value="F:ATP hydrolysis activity"/>
    <property type="evidence" value="ECO:0007669"/>
    <property type="project" value="RHEA"/>
</dbReference>
<dbReference type="GO" id="GO:0003690">
    <property type="term" value="F:double-stranded DNA binding"/>
    <property type="evidence" value="ECO:0007669"/>
    <property type="project" value="UniProtKB-UniRule"/>
</dbReference>
<dbReference type="GO" id="GO:0000724">
    <property type="term" value="P:double-strand break repair via homologous recombination"/>
    <property type="evidence" value="ECO:0007669"/>
    <property type="project" value="UniProtKB-UniRule"/>
</dbReference>
<dbReference type="CDD" id="cd17932">
    <property type="entry name" value="DEXQc_UvrD"/>
    <property type="match status" value="1"/>
</dbReference>
<dbReference type="FunFam" id="3.40.50.300:FF:001196">
    <property type="entry name" value="ATP-dependent helicase/nuclease subunit A"/>
    <property type="match status" value="1"/>
</dbReference>
<dbReference type="FunFam" id="3.40.50.300:FF:001236">
    <property type="entry name" value="ATP-dependent helicase/nuclease subunit A"/>
    <property type="match status" value="1"/>
</dbReference>
<dbReference type="Gene3D" id="3.90.320.10">
    <property type="match status" value="1"/>
</dbReference>
<dbReference type="Gene3D" id="3.40.50.300">
    <property type="entry name" value="P-loop containing nucleotide triphosphate hydrolases"/>
    <property type="match status" value="4"/>
</dbReference>
<dbReference type="Gene3D" id="1.10.486.10">
    <property type="entry name" value="PCRA, domain 4"/>
    <property type="match status" value="1"/>
</dbReference>
<dbReference type="HAMAP" id="MF_01451">
    <property type="entry name" value="AddA"/>
    <property type="match status" value="1"/>
</dbReference>
<dbReference type="InterPro" id="IPR014152">
    <property type="entry name" value="AddA"/>
</dbReference>
<dbReference type="InterPro" id="IPR014017">
    <property type="entry name" value="DNA_helicase_UvrD-like_C"/>
</dbReference>
<dbReference type="InterPro" id="IPR000212">
    <property type="entry name" value="DNA_helicase_UvrD/REP"/>
</dbReference>
<dbReference type="InterPro" id="IPR027417">
    <property type="entry name" value="P-loop_NTPase"/>
</dbReference>
<dbReference type="InterPro" id="IPR011604">
    <property type="entry name" value="PDDEXK-like_dom_sf"/>
</dbReference>
<dbReference type="InterPro" id="IPR038726">
    <property type="entry name" value="PDDEXK_AddAB-type"/>
</dbReference>
<dbReference type="InterPro" id="IPR011335">
    <property type="entry name" value="Restrct_endonuc-II-like"/>
</dbReference>
<dbReference type="InterPro" id="IPR014016">
    <property type="entry name" value="UvrD-like_ATP-bd"/>
</dbReference>
<dbReference type="NCBIfam" id="TIGR02785">
    <property type="entry name" value="addA_Gpos"/>
    <property type="match status" value="1"/>
</dbReference>
<dbReference type="PANTHER" id="PTHR11070:SF48">
    <property type="entry name" value="ATP-DEPENDENT HELICASE_NUCLEASE SUBUNIT A"/>
    <property type="match status" value="1"/>
</dbReference>
<dbReference type="PANTHER" id="PTHR11070">
    <property type="entry name" value="UVRD / RECB / PCRA DNA HELICASE FAMILY MEMBER"/>
    <property type="match status" value="1"/>
</dbReference>
<dbReference type="Pfam" id="PF12705">
    <property type="entry name" value="PDDEXK_1"/>
    <property type="match status" value="1"/>
</dbReference>
<dbReference type="Pfam" id="PF00580">
    <property type="entry name" value="UvrD-helicase"/>
    <property type="match status" value="1"/>
</dbReference>
<dbReference type="Pfam" id="PF13361">
    <property type="entry name" value="UvrD_C"/>
    <property type="match status" value="1"/>
</dbReference>
<dbReference type="SUPFAM" id="SSF52540">
    <property type="entry name" value="P-loop containing nucleoside triphosphate hydrolases"/>
    <property type="match status" value="1"/>
</dbReference>
<dbReference type="SUPFAM" id="SSF52980">
    <property type="entry name" value="Restriction endonuclease-like"/>
    <property type="match status" value="1"/>
</dbReference>
<dbReference type="PROSITE" id="PS51198">
    <property type="entry name" value="UVRD_HELICASE_ATP_BIND"/>
    <property type="match status" value="1"/>
</dbReference>
<dbReference type="PROSITE" id="PS51217">
    <property type="entry name" value="UVRD_HELICASE_CTER"/>
    <property type="match status" value="1"/>
</dbReference>